<sequence length="189" mass="20543">MDQLRRSLQDAPIIEKDGYHYFVHPISDGVPMLEPSLLREIVIKIIRKASLENVDKIVTPAAMGIHISTAVSLMTDIPLVVIRKRQYGLEGEVALFQETGYSENQMYINDVEAGDRVLVLDDVLSTGGTLKAITEALGDIGAEVEDVVAVIKKVGGENKIDASPYAVKTLINVDVVDGEVVIVDERGDG</sequence>
<organism>
    <name type="scientific">Halalkalicoccus jeotgali (strain DSM 18796 / CECT 7217 / JCM 14584 / KCTC 4019 / B3)</name>
    <dbReference type="NCBI Taxonomy" id="795797"/>
    <lineage>
        <taxon>Archaea</taxon>
        <taxon>Methanobacteriati</taxon>
        <taxon>Methanobacteriota</taxon>
        <taxon>Stenosarchaea group</taxon>
        <taxon>Halobacteria</taxon>
        <taxon>Halobacteriales</taxon>
        <taxon>Halococcaceae</taxon>
        <taxon>Halalkalicoccus</taxon>
    </lineage>
</organism>
<gene>
    <name type="ordered locus">HacjB3_11990</name>
</gene>
<proteinExistence type="inferred from homology"/>
<protein>
    <recommendedName>
        <fullName evidence="1">HGPRTase-like protein 2</fullName>
        <ecNumber evidence="1">2.4.2.-</ecNumber>
    </recommendedName>
</protein>
<accession>D8J663</accession>
<reference key="1">
    <citation type="journal article" date="2010" name="J. Bacteriol.">
        <title>Complete genome sequence of Halalkalicoccus jeotgali B3(T), an extremely halophilic archaeon.</title>
        <authorList>
            <person name="Roh S.W."/>
            <person name="Nam Y.D."/>
            <person name="Nam S.H."/>
            <person name="Choi S.H."/>
            <person name="Park H.S."/>
            <person name="Bae J.W."/>
        </authorList>
    </citation>
    <scope>NUCLEOTIDE SEQUENCE [LARGE SCALE GENOMIC DNA]</scope>
    <source>
        <strain>DSM 18796 / CECT 7217 / JCM 14584 / KCTC 4019 / B3</strain>
    </source>
</reference>
<name>HPRL2_HALJB</name>
<evidence type="ECO:0000255" key="1">
    <source>
        <dbReference type="HAMAP-Rule" id="MF_01467"/>
    </source>
</evidence>
<dbReference type="EC" id="2.4.2.-" evidence="1"/>
<dbReference type="EMBL" id="CP002062">
    <property type="protein sequence ID" value="ADJ15781.1"/>
    <property type="molecule type" value="Genomic_DNA"/>
</dbReference>
<dbReference type="RefSeq" id="WP_008416596.1">
    <property type="nucleotide sequence ID" value="NC_014297.1"/>
</dbReference>
<dbReference type="SMR" id="D8J663"/>
<dbReference type="STRING" id="795797.HacjB3_11990"/>
<dbReference type="GeneID" id="9420212"/>
<dbReference type="KEGG" id="hje:HacjB3_11990"/>
<dbReference type="eggNOG" id="arCOG00030">
    <property type="taxonomic scope" value="Archaea"/>
</dbReference>
<dbReference type="HOGENOM" id="CLU_126376_0_0_2"/>
<dbReference type="OrthoDB" id="8323at2157"/>
<dbReference type="Proteomes" id="UP000000390">
    <property type="component" value="Chromosome"/>
</dbReference>
<dbReference type="GO" id="GO:0016740">
    <property type="term" value="F:transferase activity"/>
    <property type="evidence" value="ECO:0007669"/>
    <property type="project" value="UniProtKB-KW"/>
</dbReference>
<dbReference type="GO" id="GO:0006166">
    <property type="term" value="P:purine ribonucleoside salvage"/>
    <property type="evidence" value="ECO:0007669"/>
    <property type="project" value="UniProtKB-KW"/>
</dbReference>
<dbReference type="CDD" id="cd06223">
    <property type="entry name" value="PRTases_typeI"/>
    <property type="match status" value="1"/>
</dbReference>
<dbReference type="Gene3D" id="3.40.50.2020">
    <property type="match status" value="1"/>
</dbReference>
<dbReference type="HAMAP" id="MF_01467">
    <property type="entry name" value="Hypx_phosphoribosyltr"/>
    <property type="match status" value="1"/>
</dbReference>
<dbReference type="InterPro" id="IPR026597">
    <property type="entry name" value="HGPRTase-like"/>
</dbReference>
<dbReference type="InterPro" id="IPR000836">
    <property type="entry name" value="PRibTrfase_dom"/>
</dbReference>
<dbReference type="InterPro" id="IPR029057">
    <property type="entry name" value="PRTase-like"/>
</dbReference>
<dbReference type="InterPro" id="IPR050118">
    <property type="entry name" value="Pur/Pyrimidine_PRTase"/>
</dbReference>
<dbReference type="NCBIfam" id="NF040646">
    <property type="entry name" value="HPT_Archaea"/>
    <property type="match status" value="1"/>
</dbReference>
<dbReference type="NCBIfam" id="NF002635">
    <property type="entry name" value="PRK02304.1-4"/>
    <property type="match status" value="1"/>
</dbReference>
<dbReference type="PANTHER" id="PTHR43864">
    <property type="entry name" value="HYPOXANTHINE/GUANINE PHOSPHORIBOSYLTRANSFERASE"/>
    <property type="match status" value="1"/>
</dbReference>
<dbReference type="PANTHER" id="PTHR43864:SF1">
    <property type="entry name" value="XANTHINE PHOSPHORIBOSYLTRANSFERASE"/>
    <property type="match status" value="1"/>
</dbReference>
<dbReference type="Pfam" id="PF00156">
    <property type="entry name" value="Pribosyltran"/>
    <property type="match status" value="1"/>
</dbReference>
<dbReference type="SUPFAM" id="SSF53271">
    <property type="entry name" value="PRTase-like"/>
    <property type="match status" value="1"/>
</dbReference>
<dbReference type="PROSITE" id="PS00103">
    <property type="entry name" value="PUR_PYR_PR_TRANSFER"/>
    <property type="match status" value="1"/>
</dbReference>
<comment type="function">
    <text evidence="1">May catalyze a purine salvage reaction, the substrate is unknown.</text>
</comment>
<comment type="similarity">
    <text evidence="1">Belongs to the purine/pyrimidine phosphoribosyltransferase family. Archaeal HPRT subfamily.</text>
</comment>
<feature type="chain" id="PRO_0000415448" description="HGPRTase-like protein 2">
    <location>
        <begin position="1"/>
        <end position="189"/>
    </location>
</feature>
<keyword id="KW-0660">Purine salvage</keyword>
<keyword id="KW-0808">Transferase</keyword>